<name>DMT1B_XENLA</name>
<comment type="function">
    <text evidence="1">Transcription factor that plays a key role in male sex determination and differentiation by controlling testis development and germ cell proliferation. Acts both as a transcription repressor and activator (By similarity).</text>
</comment>
<comment type="subcellular location">
    <subcellularLocation>
        <location evidence="2">Nucleus</location>
    </subcellularLocation>
</comment>
<comment type="similarity">
    <text evidence="4">Belongs to the DMRT family.</text>
</comment>
<feature type="chain" id="PRO_0000416903" description="Doublesex- and mab-3-related transcription factor 1B">
    <location>
        <begin position="1"/>
        <end position="336"/>
    </location>
</feature>
<feature type="DNA-binding region" description="DM" evidence="2">
    <location>
        <begin position="32"/>
        <end position="79"/>
    </location>
</feature>
<feature type="region of interest" description="Disordered" evidence="3">
    <location>
        <begin position="1"/>
        <end position="28"/>
    </location>
</feature>
<feature type="region of interest" description="Disordered" evidence="3">
    <location>
        <begin position="113"/>
        <end position="138"/>
    </location>
</feature>
<feature type="region of interest" description="Disordered" evidence="3">
    <location>
        <begin position="285"/>
        <end position="336"/>
    </location>
</feature>
<feature type="compositionally biased region" description="Polar residues" evidence="3">
    <location>
        <begin position="1"/>
        <end position="17"/>
    </location>
</feature>
<feature type="compositionally biased region" description="Low complexity" evidence="3">
    <location>
        <begin position="113"/>
        <end position="135"/>
    </location>
</feature>
<feature type="compositionally biased region" description="Polar residues" evidence="3">
    <location>
        <begin position="288"/>
        <end position="311"/>
    </location>
</feature>
<feature type="compositionally biased region" description="Polar residues" evidence="3">
    <location>
        <begin position="318"/>
        <end position="327"/>
    </location>
</feature>
<feature type="sequence conflict" description="In Ref. 2; AAI70391." evidence="4" ref="2">
    <original>P</original>
    <variation>Q</variation>
    <location>
        <position position="18"/>
    </location>
</feature>
<feature type="sequence conflict" description="In Ref. 2; AAI70391." evidence="4" ref="2">
    <original>V</original>
    <variation>A</variation>
    <location>
        <position position="75"/>
    </location>
</feature>
<feature type="sequence conflict" description="In Ref. 1; BAF51969." evidence="4" ref="1">
    <original>T</original>
    <variation>N</variation>
    <location>
        <position position="133"/>
    </location>
</feature>
<gene>
    <name type="primary">dmrt1-b</name>
</gene>
<organism>
    <name type="scientific">Xenopus laevis</name>
    <name type="common">African clawed frog</name>
    <dbReference type="NCBI Taxonomy" id="8355"/>
    <lineage>
        <taxon>Eukaryota</taxon>
        <taxon>Metazoa</taxon>
        <taxon>Chordata</taxon>
        <taxon>Craniata</taxon>
        <taxon>Vertebrata</taxon>
        <taxon>Euteleostomi</taxon>
        <taxon>Amphibia</taxon>
        <taxon>Batrachia</taxon>
        <taxon>Anura</taxon>
        <taxon>Pipoidea</taxon>
        <taxon>Pipidae</taxon>
        <taxon>Xenopodinae</taxon>
        <taxon>Xenopus</taxon>
        <taxon>Xenopus</taxon>
    </lineage>
</organism>
<evidence type="ECO:0000250" key="1"/>
<evidence type="ECO:0000255" key="2">
    <source>
        <dbReference type="PROSITE-ProRule" id="PRU00070"/>
    </source>
</evidence>
<evidence type="ECO:0000256" key="3">
    <source>
        <dbReference type="SAM" id="MobiDB-lite"/>
    </source>
</evidence>
<evidence type="ECO:0000305" key="4"/>
<reference key="1">
    <citation type="submission" date="2006-03" db="EMBL/GenBank/DDBJ databases">
        <title>Molecular cloning of Dmrt1 variants in Xenopus.</title>
        <authorList>
            <person name="Osawa N."/>
            <person name="Nakamura M."/>
        </authorList>
    </citation>
    <scope>NUCLEOTIDE SEQUENCE [MRNA]</scope>
</reference>
<reference key="2">
    <citation type="submission" date="2008-11" db="EMBL/GenBank/DDBJ databases">
        <authorList>
            <consortium name="NIH - Xenopus Gene Collection (XGC) project"/>
        </authorList>
    </citation>
    <scope>NUCLEOTIDE SEQUENCE [LARGE SCALE MRNA]</scope>
    <source>
        <tissue>Oocyte</tissue>
    </source>
</reference>
<keyword id="KW-0010">Activator</keyword>
<keyword id="KW-0217">Developmental protein</keyword>
<keyword id="KW-0221">Differentiation</keyword>
<keyword id="KW-0238">DNA-binding</keyword>
<keyword id="KW-0479">Metal-binding</keyword>
<keyword id="KW-0539">Nucleus</keyword>
<keyword id="KW-1185">Reference proteome</keyword>
<keyword id="KW-0678">Repressor</keyword>
<keyword id="KW-0726">Sexual differentiation</keyword>
<keyword id="KW-0804">Transcription</keyword>
<keyword id="KW-0805">Transcription regulation</keyword>
<keyword id="KW-0862">Zinc</keyword>
<proteinExistence type="evidence at transcript level"/>
<sequence>MQNNEETYSKTRSTGQHPSGVHGKKSPRLPKCARCRNHGYASPLKGHKRFCMWRDCQCKKCSLIAERQRVMAAQVALRRQQAQEEELGISHPIPLPIAAELLIKREHGGSSSCLMLESSSTQTTSTPTSGSTTSSDGKMLIQDIPSITSRGHMESTSELVMDSPYYSNFYQPPLYPYYNNLYNYPPYQMAMTAESTSGNDMGGISGPPMKSSHRNHPAAYVPSQSGNQWQMKNGDNRFSGHSTSSQFRMHSYYSPYLGQSVPNPACVPSFLTFEEIPSYSEAKASVLSPPSSQDSGIISLCSNSPVSNESTKAVAKQEPNSESSAFTITAAAEDGE</sequence>
<dbReference type="EMBL" id="AB252635">
    <property type="protein sequence ID" value="BAF51969.1"/>
    <property type="molecule type" value="mRNA"/>
</dbReference>
<dbReference type="EMBL" id="BC170389">
    <property type="protein sequence ID" value="AAI70389.1"/>
    <property type="molecule type" value="mRNA"/>
</dbReference>
<dbReference type="EMBL" id="BC170391">
    <property type="protein sequence ID" value="AAI70391.1"/>
    <property type="molecule type" value="mRNA"/>
</dbReference>
<dbReference type="RefSeq" id="NP_001078952.1">
    <property type="nucleotide sequence ID" value="NM_001085483.1"/>
</dbReference>
<dbReference type="SMR" id="B7ZS42"/>
<dbReference type="GeneID" id="100048915"/>
<dbReference type="KEGG" id="xla:100048915"/>
<dbReference type="AGR" id="Xenbase:XB-GENE-6255833"/>
<dbReference type="CTD" id="100048915"/>
<dbReference type="Xenbase" id="XB-GENE-6255833">
    <property type="gene designation" value="dmrt1.S"/>
</dbReference>
<dbReference type="OrthoDB" id="9946337at2759"/>
<dbReference type="Proteomes" id="UP000186698">
    <property type="component" value="Chromosome 1S"/>
</dbReference>
<dbReference type="Bgee" id="100048915">
    <property type="expression patterns" value="Expressed in testis and 5 other cell types or tissues"/>
</dbReference>
<dbReference type="GO" id="GO:0005634">
    <property type="term" value="C:nucleus"/>
    <property type="evidence" value="ECO:0000318"/>
    <property type="project" value="GO_Central"/>
</dbReference>
<dbReference type="GO" id="GO:0000981">
    <property type="term" value="F:DNA-binding transcription factor activity, RNA polymerase II-specific"/>
    <property type="evidence" value="ECO:0000318"/>
    <property type="project" value="GO_Central"/>
</dbReference>
<dbReference type="GO" id="GO:0046872">
    <property type="term" value="F:metal ion binding"/>
    <property type="evidence" value="ECO:0007669"/>
    <property type="project" value="UniProtKB-KW"/>
</dbReference>
<dbReference type="GO" id="GO:0000978">
    <property type="term" value="F:RNA polymerase II cis-regulatory region sequence-specific DNA binding"/>
    <property type="evidence" value="ECO:0000318"/>
    <property type="project" value="GO_Central"/>
</dbReference>
<dbReference type="GO" id="GO:0030154">
    <property type="term" value="P:cell differentiation"/>
    <property type="evidence" value="ECO:0007669"/>
    <property type="project" value="UniProtKB-KW"/>
</dbReference>
<dbReference type="GO" id="GO:0006357">
    <property type="term" value="P:regulation of transcription by RNA polymerase II"/>
    <property type="evidence" value="ECO:0000318"/>
    <property type="project" value="GO_Central"/>
</dbReference>
<dbReference type="GO" id="GO:0007548">
    <property type="term" value="P:sex differentiation"/>
    <property type="evidence" value="ECO:0000318"/>
    <property type="project" value="GO_Central"/>
</dbReference>
<dbReference type="FunFam" id="4.10.1040.10:FF:000001">
    <property type="entry name" value="doublesex- and mab-3-related transcription factor 1"/>
    <property type="match status" value="1"/>
</dbReference>
<dbReference type="Gene3D" id="4.10.1040.10">
    <property type="entry name" value="DM DNA-binding domain"/>
    <property type="match status" value="1"/>
</dbReference>
<dbReference type="InterPro" id="IPR001275">
    <property type="entry name" value="DM_DNA-bd"/>
</dbReference>
<dbReference type="InterPro" id="IPR036407">
    <property type="entry name" value="DM_DNA-bd_sf"/>
</dbReference>
<dbReference type="InterPro" id="IPR026607">
    <property type="entry name" value="DMRT"/>
</dbReference>
<dbReference type="InterPro" id="IPR022114">
    <property type="entry name" value="DMRT1-like"/>
</dbReference>
<dbReference type="PANTHER" id="PTHR12322">
    <property type="entry name" value="DOUBLESEX AND MAB-3 RELATED TRANSCRIPTION FACTOR DMRT"/>
    <property type="match status" value="1"/>
</dbReference>
<dbReference type="PANTHER" id="PTHR12322:SF70">
    <property type="entry name" value="DOUBLESEX- AND MAB-3-RELATED TRANSCRIPTION FACTOR 1"/>
    <property type="match status" value="1"/>
</dbReference>
<dbReference type="Pfam" id="PF00751">
    <property type="entry name" value="DM"/>
    <property type="match status" value="1"/>
</dbReference>
<dbReference type="Pfam" id="PF12374">
    <property type="entry name" value="Dmrt1"/>
    <property type="match status" value="1"/>
</dbReference>
<dbReference type="SMART" id="SM00301">
    <property type="entry name" value="DM"/>
    <property type="match status" value="1"/>
</dbReference>
<dbReference type="SUPFAM" id="SSF82927">
    <property type="entry name" value="Cysteine-rich DNA binding domain, (DM domain)"/>
    <property type="match status" value="1"/>
</dbReference>
<dbReference type="PROSITE" id="PS40000">
    <property type="entry name" value="DM_1"/>
    <property type="match status" value="1"/>
</dbReference>
<dbReference type="PROSITE" id="PS50809">
    <property type="entry name" value="DM_2"/>
    <property type="match status" value="1"/>
</dbReference>
<protein>
    <recommendedName>
        <fullName>Doublesex- and mab-3-related transcription factor 1B</fullName>
    </recommendedName>
    <alternativeName>
        <fullName>DMRT1-beta</fullName>
    </alternativeName>
</protein>
<accession>B7ZS42</accession>
<accession>A4PBN7</accession>
<accession>B7ZS44</accession>